<reference key="1">
    <citation type="submission" date="2008-02" db="EMBL/GenBank/DDBJ databases">
        <title>Complete sequence of Pseudomonas putida W619.</title>
        <authorList>
            <person name="Copeland A."/>
            <person name="Lucas S."/>
            <person name="Lapidus A."/>
            <person name="Barry K."/>
            <person name="Detter J.C."/>
            <person name="Glavina del Rio T."/>
            <person name="Dalin E."/>
            <person name="Tice H."/>
            <person name="Pitluck S."/>
            <person name="Chain P."/>
            <person name="Malfatti S."/>
            <person name="Shin M."/>
            <person name="Vergez L."/>
            <person name="Schmutz J."/>
            <person name="Larimer F."/>
            <person name="Land M."/>
            <person name="Hauser L."/>
            <person name="Kyrpides N."/>
            <person name="Kim E."/>
            <person name="Taghavi S."/>
            <person name="Vangronsveld D."/>
            <person name="van der Lelie D."/>
            <person name="Richardson P."/>
        </authorList>
    </citation>
    <scope>NUCLEOTIDE SEQUENCE [LARGE SCALE GENOMIC DNA]</scope>
    <source>
        <strain>W619</strain>
    </source>
</reference>
<protein>
    <recommendedName>
        <fullName evidence="1">Oxaloacetate decarboxylase 1</fullName>
        <ecNumber evidence="1">4.1.1.112</ecNumber>
    </recommendedName>
</protein>
<comment type="function">
    <text evidence="1">Catalyzes the decarboxylation of oxaloacetate into pyruvate. Seems to play a role in maintaining cellular concentrations of bicarbonate and pyruvate.</text>
</comment>
<comment type="catalytic activity">
    <reaction evidence="1">
        <text>oxaloacetate + H(+) = pyruvate + CO2</text>
        <dbReference type="Rhea" id="RHEA:15641"/>
        <dbReference type="ChEBI" id="CHEBI:15361"/>
        <dbReference type="ChEBI" id="CHEBI:15378"/>
        <dbReference type="ChEBI" id="CHEBI:16452"/>
        <dbReference type="ChEBI" id="CHEBI:16526"/>
        <dbReference type="EC" id="4.1.1.112"/>
    </reaction>
</comment>
<comment type="cofactor">
    <cofactor evidence="1">
        <name>Mg(2+)</name>
        <dbReference type="ChEBI" id="CHEBI:18420"/>
    </cofactor>
    <text evidence="1">Binds 1 Mg(2+) ion per subunit.</text>
</comment>
<comment type="subunit">
    <text evidence="1">Homotetramer; dimer of dimers.</text>
</comment>
<comment type="similarity">
    <text evidence="2">Belongs to the isocitrate lyase/PEP mutase superfamily. Oxaloacetate decarboxylase family.</text>
</comment>
<proteinExistence type="inferred from homology"/>
<accession>B1J195</accession>
<feature type="chain" id="PRO_0000364069" description="Oxaloacetate decarboxylase 1">
    <location>
        <begin position="1"/>
        <end position="289"/>
    </location>
</feature>
<feature type="binding site" evidence="1">
    <location>
        <position position="50"/>
    </location>
    <ligand>
        <name>substrate</name>
    </ligand>
</feature>
<feature type="binding site" evidence="1">
    <location>
        <position position="88"/>
    </location>
    <ligand>
        <name>Mg(2+)</name>
        <dbReference type="ChEBI" id="CHEBI:18420"/>
    </ligand>
</feature>
<feature type="binding site" evidence="1">
    <location>
        <position position="159"/>
    </location>
    <ligand>
        <name>substrate</name>
    </ligand>
</feature>
<feature type="binding site" evidence="1">
    <location>
        <position position="235"/>
    </location>
    <ligand>
        <name>substrate</name>
    </ligand>
</feature>
<sequence>MPKASHQDLRFAFRELLASGSCYHTASVFDPMSARIAADLGFEVGILGGSVASLQVLAAPDFALITLSEFVEQATRIGRVAQLPVLADADHGYGNALNVMRTVIELERAGVAALTIEDTLLPAQFGRKSTDLIPVEEGVGKIRAALEARVDSSLSIIARTNAGVLSTEEIIVRTQSYQKAGADAICMVGVKDFEQLEQIAGHLSVPLMLVTYANPNLHDDERLARLGVRIVVDGHAAYFAAIKATYDCLRLQRGQQNKSENLTATELSHTYTQPEDYIRWAKEYMSVDE</sequence>
<dbReference type="EC" id="4.1.1.112" evidence="1"/>
<dbReference type="EMBL" id="CP000949">
    <property type="protein sequence ID" value="ACA71534.1"/>
    <property type="molecule type" value="Genomic_DNA"/>
</dbReference>
<dbReference type="SMR" id="B1J195"/>
<dbReference type="STRING" id="390235.PputW619_1029"/>
<dbReference type="KEGG" id="ppw:PputW619_1029"/>
<dbReference type="eggNOG" id="COG2513">
    <property type="taxonomic scope" value="Bacteria"/>
</dbReference>
<dbReference type="HOGENOM" id="CLU_027389_3_2_6"/>
<dbReference type="OrthoDB" id="9771433at2"/>
<dbReference type="GO" id="GO:0000287">
    <property type="term" value="F:magnesium ion binding"/>
    <property type="evidence" value="ECO:0007669"/>
    <property type="project" value="UniProtKB-UniRule"/>
</dbReference>
<dbReference type="GO" id="GO:0046421">
    <property type="term" value="F:methylisocitrate lyase activity"/>
    <property type="evidence" value="ECO:0007669"/>
    <property type="project" value="TreeGrafter"/>
</dbReference>
<dbReference type="GO" id="GO:0008948">
    <property type="term" value="F:oxaloacetate decarboxylase activity"/>
    <property type="evidence" value="ECO:0007669"/>
    <property type="project" value="UniProtKB-UniRule"/>
</dbReference>
<dbReference type="GO" id="GO:0006107">
    <property type="term" value="P:oxaloacetate metabolic process"/>
    <property type="evidence" value="ECO:0007669"/>
    <property type="project" value="UniProtKB-UniRule"/>
</dbReference>
<dbReference type="GO" id="GO:0019629">
    <property type="term" value="P:propionate catabolic process, 2-methylcitrate cycle"/>
    <property type="evidence" value="ECO:0007669"/>
    <property type="project" value="TreeGrafter"/>
</dbReference>
<dbReference type="GO" id="GO:0042866">
    <property type="term" value="P:pyruvate biosynthetic process"/>
    <property type="evidence" value="ECO:0007669"/>
    <property type="project" value="UniProtKB-UniRule"/>
</dbReference>
<dbReference type="CDD" id="cd00377">
    <property type="entry name" value="ICL_PEPM"/>
    <property type="match status" value="1"/>
</dbReference>
<dbReference type="Gene3D" id="3.20.20.60">
    <property type="entry name" value="Phosphoenolpyruvate-binding domains"/>
    <property type="match status" value="1"/>
</dbReference>
<dbReference type="HAMAP" id="MF_01299">
    <property type="entry name" value="OadC"/>
    <property type="match status" value="1"/>
</dbReference>
<dbReference type="InterPro" id="IPR039556">
    <property type="entry name" value="ICL/PEPM"/>
</dbReference>
<dbReference type="InterPro" id="IPR023687">
    <property type="entry name" value="Oxaloacetate_deCOase_bac"/>
</dbReference>
<dbReference type="InterPro" id="IPR015813">
    <property type="entry name" value="Pyrv/PenolPyrv_kinase-like_dom"/>
</dbReference>
<dbReference type="InterPro" id="IPR040442">
    <property type="entry name" value="Pyrv_kinase-like_dom_sf"/>
</dbReference>
<dbReference type="PANTHER" id="PTHR42905:SF3">
    <property type="entry name" value="OXALOACETATE DECARBOXYLASE"/>
    <property type="match status" value="1"/>
</dbReference>
<dbReference type="PANTHER" id="PTHR42905">
    <property type="entry name" value="PHOSPHOENOLPYRUVATE CARBOXYLASE"/>
    <property type="match status" value="1"/>
</dbReference>
<dbReference type="Pfam" id="PF13714">
    <property type="entry name" value="PEP_mutase"/>
    <property type="match status" value="1"/>
</dbReference>
<dbReference type="SUPFAM" id="SSF51621">
    <property type="entry name" value="Phosphoenolpyruvate/pyruvate domain"/>
    <property type="match status" value="1"/>
</dbReference>
<organism>
    <name type="scientific">Pseudomonas putida (strain W619)</name>
    <dbReference type="NCBI Taxonomy" id="390235"/>
    <lineage>
        <taxon>Bacteria</taxon>
        <taxon>Pseudomonadati</taxon>
        <taxon>Pseudomonadota</taxon>
        <taxon>Gammaproteobacteria</taxon>
        <taxon>Pseudomonadales</taxon>
        <taxon>Pseudomonadaceae</taxon>
        <taxon>Pseudomonas</taxon>
    </lineage>
</organism>
<evidence type="ECO:0000255" key="1">
    <source>
        <dbReference type="HAMAP-Rule" id="MF_01299"/>
    </source>
</evidence>
<evidence type="ECO:0000305" key="2"/>
<keyword id="KW-0210">Decarboxylase</keyword>
<keyword id="KW-0456">Lyase</keyword>
<keyword id="KW-0460">Magnesium</keyword>
<keyword id="KW-0479">Metal-binding</keyword>
<gene>
    <name type="ordered locus">PputW619_1029</name>
</gene>
<name>OADC1_PSEPW</name>